<keyword id="KW-0997">Cell inner membrane</keyword>
<keyword id="KW-1003">Cell membrane</keyword>
<keyword id="KW-0472">Membrane</keyword>
<keyword id="KW-0511">Multifunctional enzyme</keyword>
<keyword id="KW-0520">NAD</keyword>
<keyword id="KW-0874">Quinone</keyword>
<keyword id="KW-1185">Reference proteome</keyword>
<keyword id="KW-1278">Translocase</keyword>
<keyword id="KW-0813">Transport</keyword>
<keyword id="KW-0830">Ubiquinone</keyword>
<proteinExistence type="inferred from homology"/>
<dbReference type="EC" id="7.1.1.-" evidence="1"/>
<dbReference type="EMBL" id="BX571869">
    <property type="protein sequence ID" value="CAE15461.1"/>
    <property type="molecule type" value="Genomic_DNA"/>
</dbReference>
<dbReference type="RefSeq" id="WP_011147304.1">
    <property type="nucleotide sequence ID" value="NC_005126.1"/>
</dbReference>
<dbReference type="SMR" id="Q7N2I9"/>
<dbReference type="STRING" id="243265.plu3087"/>
<dbReference type="GeneID" id="48849348"/>
<dbReference type="KEGG" id="plu:plu3087"/>
<dbReference type="eggNOG" id="COG0649">
    <property type="taxonomic scope" value="Bacteria"/>
</dbReference>
<dbReference type="eggNOG" id="COG0852">
    <property type="taxonomic scope" value="Bacteria"/>
</dbReference>
<dbReference type="HOGENOM" id="CLU_015134_3_2_6"/>
<dbReference type="OrthoDB" id="9801496at2"/>
<dbReference type="Proteomes" id="UP000002514">
    <property type="component" value="Chromosome"/>
</dbReference>
<dbReference type="GO" id="GO:0030964">
    <property type="term" value="C:NADH dehydrogenase complex"/>
    <property type="evidence" value="ECO:0007669"/>
    <property type="project" value="InterPro"/>
</dbReference>
<dbReference type="GO" id="GO:0005886">
    <property type="term" value="C:plasma membrane"/>
    <property type="evidence" value="ECO:0007669"/>
    <property type="project" value="UniProtKB-SubCell"/>
</dbReference>
<dbReference type="GO" id="GO:0051287">
    <property type="term" value="F:NAD binding"/>
    <property type="evidence" value="ECO:0007669"/>
    <property type="project" value="InterPro"/>
</dbReference>
<dbReference type="GO" id="GO:0008137">
    <property type="term" value="F:NADH dehydrogenase (ubiquinone) activity"/>
    <property type="evidence" value="ECO:0007669"/>
    <property type="project" value="InterPro"/>
</dbReference>
<dbReference type="GO" id="GO:0050136">
    <property type="term" value="F:NADH:ubiquinone reductase (non-electrogenic) activity"/>
    <property type="evidence" value="ECO:0007669"/>
    <property type="project" value="UniProtKB-UniRule"/>
</dbReference>
<dbReference type="GO" id="GO:0048038">
    <property type="term" value="F:quinone binding"/>
    <property type="evidence" value="ECO:0007669"/>
    <property type="project" value="UniProtKB-KW"/>
</dbReference>
<dbReference type="FunFam" id="1.10.645.10:FF:000001">
    <property type="entry name" value="NADH-quinone oxidoreductase subunit C/D"/>
    <property type="match status" value="1"/>
</dbReference>
<dbReference type="FunFam" id="3.30.460.80:FF:000001">
    <property type="entry name" value="NADH-quinone oxidoreductase subunit C/D"/>
    <property type="match status" value="1"/>
</dbReference>
<dbReference type="Gene3D" id="1.10.645.10">
    <property type="entry name" value="Cytochrome-c3 Hydrogenase, chain B"/>
    <property type="match status" value="1"/>
</dbReference>
<dbReference type="Gene3D" id="3.30.460.80">
    <property type="entry name" value="NADH:ubiquinone oxidoreductase, 30kDa subunit"/>
    <property type="match status" value="1"/>
</dbReference>
<dbReference type="HAMAP" id="MF_01357">
    <property type="entry name" value="NDH1_NuoC"/>
    <property type="match status" value="1"/>
</dbReference>
<dbReference type="HAMAP" id="MF_01359">
    <property type="entry name" value="NDH1_NuoCD_1"/>
    <property type="match status" value="1"/>
</dbReference>
<dbReference type="HAMAP" id="MF_01358">
    <property type="entry name" value="NDH1_NuoD"/>
    <property type="match status" value="1"/>
</dbReference>
<dbReference type="InterPro" id="IPR010218">
    <property type="entry name" value="NADH_DH_suC"/>
</dbReference>
<dbReference type="InterPro" id="IPR023062">
    <property type="entry name" value="NADH_DH_suCD"/>
</dbReference>
<dbReference type="InterPro" id="IPR001135">
    <property type="entry name" value="NADH_Q_OxRdtase_suD"/>
</dbReference>
<dbReference type="InterPro" id="IPR037232">
    <property type="entry name" value="NADH_quin_OxRdtase_su_C/D-like"/>
</dbReference>
<dbReference type="InterPro" id="IPR001268">
    <property type="entry name" value="NADH_UbQ_OxRdtase_30kDa_su"/>
</dbReference>
<dbReference type="InterPro" id="IPR014029">
    <property type="entry name" value="NADH_UbQ_OxRdtase_49kDa_CS"/>
</dbReference>
<dbReference type="InterPro" id="IPR020396">
    <property type="entry name" value="NADH_UbQ_OxRdtase_CS"/>
</dbReference>
<dbReference type="InterPro" id="IPR022885">
    <property type="entry name" value="NDH1_su_D/H"/>
</dbReference>
<dbReference type="InterPro" id="IPR029014">
    <property type="entry name" value="NiFe-Hase_large"/>
</dbReference>
<dbReference type="NCBIfam" id="TIGR01961">
    <property type="entry name" value="NuoC_fam"/>
    <property type="match status" value="1"/>
</dbReference>
<dbReference type="NCBIfam" id="TIGR01962">
    <property type="entry name" value="NuoD"/>
    <property type="match status" value="1"/>
</dbReference>
<dbReference type="NCBIfam" id="NF004739">
    <property type="entry name" value="PRK06075.1"/>
    <property type="match status" value="1"/>
</dbReference>
<dbReference type="NCBIfam" id="NF008728">
    <property type="entry name" value="PRK11742.1"/>
    <property type="match status" value="1"/>
</dbReference>
<dbReference type="PANTHER" id="PTHR11993:SF45">
    <property type="entry name" value="NADH-QUINONE OXIDOREDUCTASE SUBUNIT C_D"/>
    <property type="match status" value="1"/>
</dbReference>
<dbReference type="PANTHER" id="PTHR11993">
    <property type="entry name" value="NADH-UBIQUINONE OXIDOREDUCTASE 49 KDA SUBUNIT"/>
    <property type="match status" value="1"/>
</dbReference>
<dbReference type="Pfam" id="PF00329">
    <property type="entry name" value="Complex1_30kDa"/>
    <property type="match status" value="1"/>
</dbReference>
<dbReference type="Pfam" id="PF00346">
    <property type="entry name" value="Complex1_49kDa"/>
    <property type="match status" value="1"/>
</dbReference>
<dbReference type="SUPFAM" id="SSF56762">
    <property type="entry name" value="HydB/Nqo4-like"/>
    <property type="match status" value="1"/>
</dbReference>
<dbReference type="SUPFAM" id="SSF143243">
    <property type="entry name" value="Nqo5-like"/>
    <property type="match status" value="1"/>
</dbReference>
<dbReference type="PROSITE" id="PS00542">
    <property type="entry name" value="COMPLEX1_30K"/>
    <property type="match status" value="1"/>
</dbReference>
<dbReference type="PROSITE" id="PS00535">
    <property type="entry name" value="COMPLEX1_49K"/>
    <property type="match status" value="1"/>
</dbReference>
<comment type="function">
    <text evidence="1">NDH-1 shuttles electrons from NADH, via FMN and iron-sulfur (Fe-S) centers, to quinones in the respiratory chain. The immediate electron acceptor for the enzyme in this species is believed to be ubiquinone. Couples the redox reaction to proton translocation (for every two electrons transferred, four hydrogen ions are translocated across the cytoplasmic membrane), and thus conserves the redox energy in a proton gradient.</text>
</comment>
<comment type="catalytic activity">
    <reaction evidence="1">
        <text>a quinone + NADH + 5 H(+)(in) = a quinol + NAD(+) + 4 H(+)(out)</text>
        <dbReference type="Rhea" id="RHEA:57888"/>
        <dbReference type="ChEBI" id="CHEBI:15378"/>
        <dbReference type="ChEBI" id="CHEBI:24646"/>
        <dbReference type="ChEBI" id="CHEBI:57540"/>
        <dbReference type="ChEBI" id="CHEBI:57945"/>
        <dbReference type="ChEBI" id="CHEBI:132124"/>
    </reaction>
</comment>
<comment type="subunit">
    <text evidence="1">NDH-1 is composed of 13 different subunits. Subunits NuoB, CD, E, F, and G constitute the peripheral sector of the complex.</text>
</comment>
<comment type="subcellular location">
    <subcellularLocation>
        <location evidence="1">Cell inner membrane</location>
        <topology evidence="1">Peripheral membrane protein</topology>
        <orientation evidence="1">Cytoplasmic side</orientation>
    </subcellularLocation>
</comment>
<comment type="similarity">
    <text evidence="1">In the N-terminal section; belongs to the complex I 30 kDa subunit family.</text>
</comment>
<comment type="similarity">
    <text evidence="1">In the C-terminal section; belongs to the complex I 49 kDa subunit family.</text>
</comment>
<sequence length="599" mass="69023">MMIDQIAQESARPAWQTHDHLDDPVMGELRNHFGPDAFTVQPTRTGIPVVWVKREQLLEVMTFLKKLPKPYVMLFDLHGMDERQRTHRQGLPAADFSVFYHLLSIERNRDIMLKVALSEKELNLPTATPLFPNANWYERETWEMFGVVFNGHPNLRRIMLPPTWEGHPLRKDYPARATEFDPFELTRQKEDLEMEALTFKPEEWGMKRGTENEDFMFLNLGPNHPSSHGAFRIILQLDGEEIVDCVPDIGYHHRGAEKMGERQSWHSYIPYTDRIEYLGGCVNEMPYVLAVEKLAGIEVPDRVKTIRVMLSELFRINSHLLYISTFIQDVGGMTPVFFAFTDRQKVYDLVEAITGFRMHPAWFRIGGVAHDLPRGWDRLLRDFLNWMPKRLDSYVKAALKNSILKGRAIGVAAYNSKQALEWGTTGAGLRATGIAFDVRKWRPYSGYENFDFDVPIGNNGDCYDRVMLKVEEVRQSLRILKQCLDNMPEGPFKADHPLTTPPPKERTLQHIETMINHFLQVSWGPVMPANESFQMIEATKGINSYYLTSDGSTVSYRTRVRTPSYPHLQQIPSVIRGSLVSDLIVYLGSIDFVMSDVDR</sequence>
<gene>
    <name evidence="1" type="primary">nuoC</name>
    <name evidence="1" type="synonym">nuoCD</name>
    <name evidence="1" type="synonym">nuoD</name>
    <name type="ordered locus">plu3087</name>
</gene>
<organism>
    <name type="scientific">Photorhabdus laumondii subsp. laumondii (strain DSM 15139 / CIP 105565 / TT01)</name>
    <name type="common">Photorhabdus luminescens subsp. laumondii</name>
    <dbReference type="NCBI Taxonomy" id="243265"/>
    <lineage>
        <taxon>Bacteria</taxon>
        <taxon>Pseudomonadati</taxon>
        <taxon>Pseudomonadota</taxon>
        <taxon>Gammaproteobacteria</taxon>
        <taxon>Enterobacterales</taxon>
        <taxon>Morganellaceae</taxon>
        <taxon>Photorhabdus</taxon>
    </lineage>
</organism>
<feature type="chain" id="PRO_0000358653" description="NADH-quinone oxidoreductase subunit C/D">
    <location>
        <begin position="1"/>
        <end position="599"/>
    </location>
</feature>
<feature type="region of interest" description="NADH dehydrogenase I subunit C" evidence="1">
    <location>
        <begin position="1"/>
        <end position="190"/>
    </location>
</feature>
<feature type="region of interest" description="NADH dehydrogenase I subunit D" evidence="1">
    <location>
        <begin position="214"/>
        <end position="599"/>
    </location>
</feature>
<protein>
    <recommendedName>
        <fullName evidence="1">NADH-quinone oxidoreductase subunit C/D</fullName>
        <ecNumber evidence="1">7.1.1.-</ecNumber>
    </recommendedName>
    <alternativeName>
        <fullName evidence="1">NADH dehydrogenase I subunit C/D</fullName>
    </alternativeName>
    <alternativeName>
        <fullName evidence="1">NDH-1 subunit C/D</fullName>
    </alternativeName>
</protein>
<accession>Q7N2I9</accession>
<evidence type="ECO:0000255" key="1">
    <source>
        <dbReference type="HAMAP-Rule" id="MF_01359"/>
    </source>
</evidence>
<reference key="1">
    <citation type="journal article" date="2003" name="Nat. Biotechnol.">
        <title>The genome sequence of the entomopathogenic bacterium Photorhabdus luminescens.</title>
        <authorList>
            <person name="Duchaud E."/>
            <person name="Rusniok C."/>
            <person name="Frangeul L."/>
            <person name="Buchrieser C."/>
            <person name="Givaudan A."/>
            <person name="Taourit S."/>
            <person name="Bocs S."/>
            <person name="Boursaux-Eude C."/>
            <person name="Chandler M."/>
            <person name="Charles J.-F."/>
            <person name="Dassa E."/>
            <person name="Derose R."/>
            <person name="Derzelle S."/>
            <person name="Freyssinet G."/>
            <person name="Gaudriault S."/>
            <person name="Medigue C."/>
            <person name="Lanois A."/>
            <person name="Powell K."/>
            <person name="Siguier P."/>
            <person name="Vincent R."/>
            <person name="Wingate V."/>
            <person name="Zouine M."/>
            <person name="Glaser P."/>
            <person name="Boemare N."/>
            <person name="Danchin A."/>
            <person name="Kunst F."/>
        </authorList>
    </citation>
    <scope>NUCLEOTIDE SEQUENCE [LARGE SCALE GENOMIC DNA]</scope>
    <source>
        <strain>DSM 15139 / CIP 105565 / TT01</strain>
    </source>
</reference>
<name>NUOCD_PHOLL</name>